<proteinExistence type="evidence at protein level"/>
<protein>
    <recommendedName>
        <fullName>Acidic endochitinase</fullName>
        <ecNumber>3.2.1.14</ecNumber>
    </recommendedName>
</protein>
<name>CHIT_DIOJA</name>
<accession>P80052</accession>
<reference key="1">
    <citation type="journal article" date="1992" name="J. Biol. Chem.">
        <title>The complete amino acid sequence of yam (Dioscorea japonica) chitinase. A newly identified acidic class I chitinase.</title>
        <authorList>
            <person name="Araki T."/>
            <person name="Funatsu J."/>
            <person name="Kuramoto M."/>
            <person name="Konno H."/>
            <person name="Torikata T."/>
        </authorList>
    </citation>
    <scope>PROTEIN SEQUENCE</scope>
    <source>
        <tissue>Aerial tuber</tissue>
    </source>
</reference>
<reference key="2">
    <citation type="journal article" date="1992" name="Plant Mol. Biol.">
        <title>Amino acid sequence of the N-terminal domain of yam (Dioscorea japonica) aerial tuber acidic chitinase. Evidence for the presence of a wheat germ agglutinin domain in matured acidic chitinase from unstressed tuber.</title>
        <authorList>
            <person name="Araki T."/>
            <person name="Funatsu J."/>
            <person name="Kuramoto M."/>
            <person name="Torikata T."/>
        </authorList>
    </citation>
    <scope>PROTEIN SEQUENCE OF 1-53</scope>
    <scope>PYROGLUTAMATE FORMATION AT GLN-1</scope>
    <source>
        <tissue>Aerial tuber</tissue>
    </source>
</reference>
<reference key="3">
    <citation type="journal article" date="1996" name="Arch. Biochem. Biophys.">
        <title>Positions of disulfide bonds in yam (Dioscorea japonica) acidic class IL (class IV) chitinase.</title>
        <authorList>
            <person name="Araki T."/>
            <person name="Kuramoto M."/>
            <person name="Torikata T."/>
        </authorList>
    </citation>
    <scope>DISULFIDE BONDS IN CATALYTIC DOMAIN</scope>
</reference>
<sequence length="250" mass="27908">QNCQCDTTIYCCSQHGYCGNSYDYCGPGCQAGPCWDPCEGDGTLTVSDIVTQEFWDGIASQAAANCPGKSFYTRSNFLEAVSAYPGFGTKCTDEDRKREIAAYFAHVTHETGHLCYIEERDGHANNYCQESQQYPCNPNKEYFGRGPMQLSWNYNYIDAGKELHFDGLNDPDIVGRDPIISFKTSLWFWIRKGVQYVILDPNQGFGATIRIINGGQECDGHNTAQMMARVGYYQEYCAQLGVSPGNNLPC</sequence>
<keyword id="KW-0119">Carbohydrate metabolism</keyword>
<keyword id="KW-0146">Chitin degradation</keyword>
<keyword id="KW-0147">Chitin-binding</keyword>
<keyword id="KW-0903">Direct protein sequencing</keyword>
<keyword id="KW-1015">Disulfide bond</keyword>
<keyword id="KW-0326">Glycosidase</keyword>
<keyword id="KW-0378">Hydrolase</keyword>
<keyword id="KW-0611">Plant defense</keyword>
<keyword id="KW-0624">Polysaccharide degradation</keyword>
<keyword id="KW-0873">Pyrrolidone carboxylic acid</keyword>
<comment type="function">
    <text>Defense against chitin-containing fungal pathogens.</text>
</comment>
<comment type="catalytic activity">
    <reaction>
        <text>Random endo-hydrolysis of N-acetyl-beta-D-glucosaminide (1-&gt;4)-beta-linkages in chitin and chitodextrins.</text>
        <dbReference type="EC" id="3.2.1.14"/>
    </reaction>
</comment>
<comment type="similarity">
    <text evidence="5">Belongs to the glycosyl hydrolase 19 family. Chitinase class I subfamily.</text>
</comment>
<evidence type="ECO:0000250" key="1">
    <source>
        <dbReference type="UniProtKB" id="P29022"/>
    </source>
</evidence>
<evidence type="ECO:0000255" key="2">
    <source>
        <dbReference type="PROSITE-ProRule" id="PRU00261"/>
    </source>
</evidence>
<evidence type="ECO:0000269" key="3">
    <source>
    </source>
</evidence>
<evidence type="ECO:0000269" key="4">
    <source>
    </source>
</evidence>
<evidence type="ECO:0000305" key="5"/>
<organism>
    <name type="scientific">Dioscorea japonica</name>
    <name type="common">Japanese yam</name>
    <dbReference type="NCBI Taxonomy" id="4673"/>
    <lineage>
        <taxon>Eukaryota</taxon>
        <taxon>Viridiplantae</taxon>
        <taxon>Streptophyta</taxon>
        <taxon>Embryophyta</taxon>
        <taxon>Tracheophyta</taxon>
        <taxon>Spermatophyta</taxon>
        <taxon>Magnoliopsida</taxon>
        <taxon>Liliopsida</taxon>
        <taxon>Dioscoreales</taxon>
        <taxon>Dioscoreaceae</taxon>
        <taxon>Dioscorea</taxon>
    </lineage>
</organism>
<dbReference type="EC" id="3.2.1.14"/>
<dbReference type="PIR" id="A44039">
    <property type="entry name" value="A44039"/>
</dbReference>
<dbReference type="SMR" id="P80052"/>
<dbReference type="CAZy" id="CBM18">
    <property type="family name" value="Carbohydrate-Binding Module Family 18"/>
</dbReference>
<dbReference type="CAZy" id="GH19">
    <property type="family name" value="Glycoside Hydrolase Family 19"/>
</dbReference>
<dbReference type="GO" id="GO:0008061">
    <property type="term" value="F:chitin binding"/>
    <property type="evidence" value="ECO:0007669"/>
    <property type="project" value="UniProtKB-KW"/>
</dbReference>
<dbReference type="GO" id="GO:0008843">
    <property type="term" value="F:endochitinase activity"/>
    <property type="evidence" value="ECO:0007669"/>
    <property type="project" value="UniProtKB-EC"/>
</dbReference>
<dbReference type="GO" id="GO:0016998">
    <property type="term" value="P:cell wall macromolecule catabolic process"/>
    <property type="evidence" value="ECO:0007669"/>
    <property type="project" value="InterPro"/>
</dbReference>
<dbReference type="GO" id="GO:0006032">
    <property type="term" value="P:chitin catabolic process"/>
    <property type="evidence" value="ECO:0007669"/>
    <property type="project" value="UniProtKB-KW"/>
</dbReference>
<dbReference type="GO" id="GO:0006952">
    <property type="term" value="P:defense response"/>
    <property type="evidence" value="ECO:0007669"/>
    <property type="project" value="UniProtKB-KW"/>
</dbReference>
<dbReference type="GO" id="GO:0000272">
    <property type="term" value="P:polysaccharide catabolic process"/>
    <property type="evidence" value="ECO:0007669"/>
    <property type="project" value="UniProtKB-KW"/>
</dbReference>
<dbReference type="CDD" id="cd00325">
    <property type="entry name" value="chitinase_GH19"/>
    <property type="match status" value="1"/>
</dbReference>
<dbReference type="CDD" id="cd00035">
    <property type="entry name" value="ChtBD1"/>
    <property type="match status" value="1"/>
</dbReference>
<dbReference type="FunFam" id="3.30.20.10:FF:000001">
    <property type="entry name" value="Endochitinase (Chitinase)"/>
    <property type="match status" value="1"/>
</dbReference>
<dbReference type="Gene3D" id="1.10.530.10">
    <property type="match status" value="1"/>
</dbReference>
<dbReference type="Gene3D" id="3.30.20.10">
    <property type="entry name" value="Endochitinase, domain 2"/>
    <property type="match status" value="1"/>
</dbReference>
<dbReference type="Gene3D" id="3.30.60.10">
    <property type="entry name" value="Endochitinase-like"/>
    <property type="match status" value="1"/>
</dbReference>
<dbReference type="InterPro" id="IPR001002">
    <property type="entry name" value="Chitin-bd_1"/>
</dbReference>
<dbReference type="InterPro" id="IPR018371">
    <property type="entry name" value="Chitin-binding_1_CS"/>
</dbReference>
<dbReference type="InterPro" id="IPR036861">
    <property type="entry name" value="Endochitinase-like_sf"/>
</dbReference>
<dbReference type="InterPro" id="IPR016283">
    <property type="entry name" value="Glyco_hydro_19"/>
</dbReference>
<dbReference type="InterPro" id="IPR000726">
    <property type="entry name" value="Glyco_hydro_19_cat"/>
</dbReference>
<dbReference type="InterPro" id="IPR023346">
    <property type="entry name" value="Lysozyme-like_dom_sf"/>
</dbReference>
<dbReference type="PANTHER" id="PTHR22595:SF194">
    <property type="entry name" value="CHITINASE FAMILY PROTEIN"/>
    <property type="match status" value="1"/>
</dbReference>
<dbReference type="PANTHER" id="PTHR22595">
    <property type="entry name" value="CHITINASE-RELATED"/>
    <property type="match status" value="1"/>
</dbReference>
<dbReference type="Pfam" id="PF00182">
    <property type="entry name" value="Glyco_hydro_19"/>
    <property type="match status" value="2"/>
</dbReference>
<dbReference type="PIRSF" id="PIRSF001060">
    <property type="entry name" value="Endochitinase"/>
    <property type="match status" value="1"/>
</dbReference>
<dbReference type="SMART" id="SM00270">
    <property type="entry name" value="ChtBD1"/>
    <property type="match status" value="1"/>
</dbReference>
<dbReference type="SUPFAM" id="SSF53955">
    <property type="entry name" value="Lysozyme-like"/>
    <property type="match status" value="1"/>
</dbReference>
<dbReference type="SUPFAM" id="SSF57016">
    <property type="entry name" value="Plant lectins/antimicrobial peptides"/>
    <property type="match status" value="1"/>
</dbReference>
<dbReference type="PROSITE" id="PS00026">
    <property type="entry name" value="CHIT_BIND_I_1"/>
    <property type="match status" value="1"/>
</dbReference>
<dbReference type="PROSITE" id="PS50941">
    <property type="entry name" value="CHIT_BIND_I_2"/>
    <property type="match status" value="1"/>
</dbReference>
<dbReference type="PROSITE" id="PS00773">
    <property type="entry name" value="CHITINASE_19_1"/>
    <property type="match status" value="1"/>
</dbReference>
<dbReference type="PROSITE" id="PS00774">
    <property type="entry name" value="CHITINASE_19_2"/>
    <property type="match status" value="1"/>
</dbReference>
<feature type="chain" id="PRO_0000124826" description="Acidic endochitinase">
    <location>
        <begin position="1"/>
        <end position="250"/>
    </location>
</feature>
<feature type="domain" description="Chitin-binding type-1" evidence="2">
    <location>
        <begin position="1"/>
        <end position="36"/>
    </location>
</feature>
<feature type="active site" description="Proton donor" evidence="1">
    <location>
        <position position="110"/>
    </location>
</feature>
<feature type="modified residue" description="Pyrrolidone carboxylic acid" evidence="3">
    <location>
        <position position="1"/>
    </location>
</feature>
<feature type="disulfide bond" evidence="2">
    <location>
        <begin position="3"/>
        <end position="12"/>
    </location>
</feature>
<feature type="disulfide bond" evidence="2">
    <location>
        <begin position="5"/>
        <end position="18"/>
    </location>
</feature>
<feature type="disulfide bond" evidence="2">
    <location>
        <begin position="11"/>
        <end position="25"/>
    </location>
</feature>
<feature type="disulfide bond" evidence="2">
    <location>
        <begin position="29"/>
        <end position="34"/>
    </location>
</feature>
<feature type="disulfide bond" evidence="2 4">
    <location>
        <begin position="66"/>
        <end position="115"/>
    </location>
</feature>
<feature type="disulfide bond" evidence="2 4">
    <location>
        <begin position="128"/>
        <end position="136"/>
    </location>
</feature>
<feature type="disulfide bond" evidence="2 4">
    <location>
        <begin position="218"/>
        <end position="250"/>
    </location>
</feature>